<proteinExistence type="inferred from homology"/>
<gene>
    <name evidence="1" type="primary">xerC</name>
    <name type="ordered locus">ECUMN_4336</name>
</gene>
<reference key="1">
    <citation type="journal article" date="2009" name="PLoS Genet.">
        <title>Organised genome dynamics in the Escherichia coli species results in highly diverse adaptive paths.</title>
        <authorList>
            <person name="Touchon M."/>
            <person name="Hoede C."/>
            <person name="Tenaillon O."/>
            <person name="Barbe V."/>
            <person name="Baeriswyl S."/>
            <person name="Bidet P."/>
            <person name="Bingen E."/>
            <person name="Bonacorsi S."/>
            <person name="Bouchier C."/>
            <person name="Bouvet O."/>
            <person name="Calteau A."/>
            <person name="Chiapello H."/>
            <person name="Clermont O."/>
            <person name="Cruveiller S."/>
            <person name="Danchin A."/>
            <person name="Diard M."/>
            <person name="Dossat C."/>
            <person name="Karoui M.E."/>
            <person name="Frapy E."/>
            <person name="Garry L."/>
            <person name="Ghigo J.M."/>
            <person name="Gilles A.M."/>
            <person name="Johnson J."/>
            <person name="Le Bouguenec C."/>
            <person name="Lescat M."/>
            <person name="Mangenot S."/>
            <person name="Martinez-Jehanne V."/>
            <person name="Matic I."/>
            <person name="Nassif X."/>
            <person name="Oztas S."/>
            <person name="Petit M.A."/>
            <person name="Pichon C."/>
            <person name="Rouy Z."/>
            <person name="Ruf C.S."/>
            <person name="Schneider D."/>
            <person name="Tourret J."/>
            <person name="Vacherie B."/>
            <person name="Vallenet D."/>
            <person name="Medigue C."/>
            <person name="Rocha E.P.C."/>
            <person name="Denamur E."/>
        </authorList>
    </citation>
    <scope>NUCLEOTIDE SEQUENCE [LARGE SCALE GENOMIC DNA]</scope>
    <source>
        <strain>UMN026 / ExPEC</strain>
    </source>
</reference>
<protein>
    <recommendedName>
        <fullName evidence="1">Tyrosine recombinase XerC</fullName>
    </recommendedName>
</protein>
<sequence length="298" mass="33868">MTDLHTDVERYLRYLSVERQLSPITLLNYQRQLEAIINFASENGLQSWQQCDVTMVRNFAVRSRRKGLGAASLALRLSALRSFFDWLVSQNELKANPAKGVSAPKAPRHLPKNIDVDDMNRLLDIDINDPLAVRDRAMLEVMYGAGLRLSELVGLDIKHLDLESGEVWVMGKGSKERRLPIGRNAVAWIEHWLDLRDLFGSEDDALFLSKLGKRISARNVQKRFAEWGIKQGLNNHVHPHKLRHSFATHMLESSGDLRGVQELLGHANLSTTQIYTHLDFQHLASVYDAAHPRAKRGK</sequence>
<comment type="function">
    <text evidence="1">Site-specific tyrosine recombinase, which acts by catalyzing the cutting and rejoining of the recombining DNA molecules. Binds cooperatively to specific DNA consensus sequences that are separated from XerD binding sites by a short central region, forming the heterotetrameric XerC-XerD complex that recombines DNA substrates. The complex is essential to convert dimers of the bacterial chromosome into monomers to permit their segregation at cell division. It also contributes to the segregational stability of plasmids. In the complex XerC specifically exchanges the top DNA strands.</text>
</comment>
<comment type="activity regulation">
    <text evidence="1">FtsK may regulate the catalytic switch between XerC and XerD in the heterotetrameric complex during the two steps of the recombination process.</text>
</comment>
<comment type="subunit">
    <text evidence="1">Forms a cyclic heterotetrameric complex composed of two molecules of XerC and two molecules of XerD, in which XerC interacts with XerD via its C-terminal region, XerD interacts with XerC via its C-terminal region and so on.</text>
</comment>
<comment type="subcellular location">
    <subcellularLocation>
        <location evidence="1">Cytoplasm</location>
    </subcellularLocation>
</comment>
<comment type="similarity">
    <text evidence="1">Belongs to the 'phage' integrase family. XerC subfamily.</text>
</comment>
<evidence type="ECO:0000255" key="1">
    <source>
        <dbReference type="HAMAP-Rule" id="MF_01808"/>
    </source>
</evidence>
<evidence type="ECO:0000255" key="2">
    <source>
        <dbReference type="PROSITE-ProRule" id="PRU01246"/>
    </source>
</evidence>
<evidence type="ECO:0000255" key="3">
    <source>
        <dbReference type="PROSITE-ProRule" id="PRU01248"/>
    </source>
</evidence>
<name>XERC_ECOLU</name>
<keyword id="KW-0131">Cell cycle</keyword>
<keyword id="KW-0132">Cell division</keyword>
<keyword id="KW-0159">Chromosome partition</keyword>
<keyword id="KW-0963">Cytoplasm</keyword>
<keyword id="KW-0229">DNA integration</keyword>
<keyword id="KW-0233">DNA recombination</keyword>
<keyword id="KW-0238">DNA-binding</keyword>
<feature type="chain" id="PRO_1000187595" description="Tyrosine recombinase XerC">
    <location>
        <begin position="1"/>
        <end position="298"/>
    </location>
</feature>
<feature type="domain" description="Core-binding (CB)" evidence="3">
    <location>
        <begin position="2"/>
        <end position="88"/>
    </location>
</feature>
<feature type="domain" description="Tyr recombinase" evidence="2">
    <location>
        <begin position="109"/>
        <end position="288"/>
    </location>
</feature>
<feature type="active site" evidence="1">
    <location>
        <position position="148"/>
    </location>
</feature>
<feature type="active site" evidence="1">
    <location>
        <position position="172"/>
    </location>
</feature>
<feature type="active site" evidence="1">
    <location>
        <position position="240"/>
    </location>
</feature>
<feature type="active site" evidence="1">
    <location>
        <position position="243"/>
    </location>
</feature>
<feature type="active site" evidence="1">
    <location>
        <position position="266"/>
    </location>
</feature>
<feature type="active site" description="O-(3'-phospho-DNA)-tyrosine intermediate" evidence="1">
    <location>
        <position position="275"/>
    </location>
</feature>
<organism>
    <name type="scientific">Escherichia coli O17:K52:H18 (strain UMN026 / ExPEC)</name>
    <dbReference type="NCBI Taxonomy" id="585056"/>
    <lineage>
        <taxon>Bacteria</taxon>
        <taxon>Pseudomonadati</taxon>
        <taxon>Pseudomonadota</taxon>
        <taxon>Gammaproteobacteria</taxon>
        <taxon>Enterobacterales</taxon>
        <taxon>Enterobacteriaceae</taxon>
        <taxon>Escherichia</taxon>
    </lineage>
</organism>
<dbReference type="EMBL" id="CU928163">
    <property type="protein sequence ID" value="CAR15469.1"/>
    <property type="molecule type" value="Genomic_DNA"/>
</dbReference>
<dbReference type="RefSeq" id="WP_000130691.1">
    <property type="nucleotide sequence ID" value="NC_011751.1"/>
</dbReference>
<dbReference type="RefSeq" id="YP_002414964.1">
    <property type="nucleotide sequence ID" value="NC_011751.1"/>
</dbReference>
<dbReference type="SMR" id="B7NFB3"/>
<dbReference type="STRING" id="585056.ECUMN_4336"/>
<dbReference type="GeneID" id="75059707"/>
<dbReference type="KEGG" id="eum:ECUMN_4336"/>
<dbReference type="PATRIC" id="fig|585056.7.peg.4503"/>
<dbReference type="HOGENOM" id="CLU_027562_9_0_6"/>
<dbReference type="Proteomes" id="UP000007097">
    <property type="component" value="Chromosome"/>
</dbReference>
<dbReference type="GO" id="GO:0005737">
    <property type="term" value="C:cytoplasm"/>
    <property type="evidence" value="ECO:0007669"/>
    <property type="project" value="UniProtKB-SubCell"/>
</dbReference>
<dbReference type="GO" id="GO:0003677">
    <property type="term" value="F:DNA binding"/>
    <property type="evidence" value="ECO:0007669"/>
    <property type="project" value="UniProtKB-KW"/>
</dbReference>
<dbReference type="GO" id="GO:0009037">
    <property type="term" value="F:tyrosine-based site-specific recombinase activity"/>
    <property type="evidence" value="ECO:0007669"/>
    <property type="project" value="UniProtKB-UniRule"/>
</dbReference>
<dbReference type="GO" id="GO:0051301">
    <property type="term" value="P:cell division"/>
    <property type="evidence" value="ECO:0007669"/>
    <property type="project" value="UniProtKB-KW"/>
</dbReference>
<dbReference type="GO" id="GO:0007059">
    <property type="term" value="P:chromosome segregation"/>
    <property type="evidence" value="ECO:0007669"/>
    <property type="project" value="UniProtKB-UniRule"/>
</dbReference>
<dbReference type="GO" id="GO:0006313">
    <property type="term" value="P:DNA transposition"/>
    <property type="evidence" value="ECO:0007669"/>
    <property type="project" value="UniProtKB-UniRule"/>
</dbReference>
<dbReference type="CDD" id="cd00798">
    <property type="entry name" value="INT_XerDC_C"/>
    <property type="match status" value="1"/>
</dbReference>
<dbReference type="FunFam" id="1.10.443.10:FF:000002">
    <property type="entry name" value="Tyrosine recombinase XerC"/>
    <property type="match status" value="1"/>
</dbReference>
<dbReference type="Gene3D" id="1.10.150.130">
    <property type="match status" value="1"/>
</dbReference>
<dbReference type="Gene3D" id="1.10.443.10">
    <property type="entry name" value="Intergrase catalytic core"/>
    <property type="match status" value="1"/>
</dbReference>
<dbReference type="HAMAP" id="MF_01808">
    <property type="entry name" value="Recomb_XerC_XerD"/>
    <property type="match status" value="1"/>
</dbReference>
<dbReference type="InterPro" id="IPR044068">
    <property type="entry name" value="CB"/>
</dbReference>
<dbReference type="InterPro" id="IPR011010">
    <property type="entry name" value="DNA_brk_join_enz"/>
</dbReference>
<dbReference type="InterPro" id="IPR013762">
    <property type="entry name" value="Integrase-like_cat_sf"/>
</dbReference>
<dbReference type="InterPro" id="IPR002104">
    <property type="entry name" value="Integrase_catalytic"/>
</dbReference>
<dbReference type="InterPro" id="IPR010998">
    <property type="entry name" value="Integrase_recombinase_N"/>
</dbReference>
<dbReference type="InterPro" id="IPR004107">
    <property type="entry name" value="Integrase_SAM-like_N"/>
</dbReference>
<dbReference type="InterPro" id="IPR011931">
    <property type="entry name" value="Recomb_XerC"/>
</dbReference>
<dbReference type="InterPro" id="IPR023009">
    <property type="entry name" value="Tyrosine_recombinase_XerC/XerD"/>
</dbReference>
<dbReference type="InterPro" id="IPR050090">
    <property type="entry name" value="Tyrosine_recombinase_XerCD"/>
</dbReference>
<dbReference type="NCBIfam" id="NF001399">
    <property type="entry name" value="PRK00283.1"/>
    <property type="match status" value="1"/>
</dbReference>
<dbReference type="NCBIfam" id="TIGR02224">
    <property type="entry name" value="recomb_XerC"/>
    <property type="match status" value="1"/>
</dbReference>
<dbReference type="PANTHER" id="PTHR30349">
    <property type="entry name" value="PHAGE INTEGRASE-RELATED"/>
    <property type="match status" value="1"/>
</dbReference>
<dbReference type="PANTHER" id="PTHR30349:SF81">
    <property type="entry name" value="TYROSINE RECOMBINASE XERC"/>
    <property type="match status" value="1"/>
</dbReference>
<dbReference type="Pfam" id="PF02899">
    <property type="entry name" value="Phage_int_SAM_1"/>
    <property type="match status" value="1"/>
</dbReference>
<dbReference type="Pfam" id="PF00589">
    <property type="entry name" value="Phage_integrase"/>
    <property type="match status" value="1"/>
</dbReference>
<dbReference type="SUPFAM" id="SSF56349">
    <property type="entry name" value="DNA breaking-rejoining enzymes"/>
    <property type="match status" value="1"/>
</dbReference>
<dbReference type="SUPFAM" id="SSF47823">
    <property type="entry name" value="lambda integrase-like, N-terminal domain"/>
    <property type="match status" value="1"/>
</dbReference>
<dbReference type="PROSITE" id="PS51900">
    <property type="entry name" value="CB"/>
    <property type="match status" value="1"/>
</dbReference>
<dbReference type="PROSITE" id="PS51898">
    <property type="entry name" value="TYR_RECOMBINASE"/>
    <property type="match status" value="1"/>
</dbReference>
<accession>B7NFB3</accession>